<evidence type="ECO:0000255" key="1">
    <source>
        <dbReference type="HAMAP-Rule" id="MF_01277"/>
    </source>
</evidence>
<organism>
    <name type="scientific">Proteus mirabilis (strain HI4320)</name>
    <dbReference type="NCBI Taxonomy" id="529507"/>
    <lineage>
        <taxon>Bacteria</taxon>
        <taxon>Pseudomonadati</taxon>
        <taxon>Pseudomonadota</taxon>
        <taxon>Gammaproteobacteria</taxon>
        <taxon>Enterobacterales</taxon>
        <taxon>Morganellaceae</taxon>
        <taxon>Proteus</taxon>
    </lineage>
</organism>
<accession>B4EWM9</accession>
<protein>
    <recommendedName>
        <fullName evidence="1">HTH-type transcriptional repressor PurR</fullName>
    </recommendedName>
    <alternativeName>
        <fullName evidence="1">Pur regulon repressor</fullName>
    </alternativeName>
    <alternativeName>
        <fullName evidence="1">Purine nucleotide synthesis repressor</fullName>
    </alternativeName>
</protein>
<keyword id="KW-0238">DNA-binding</keyword>
<keyword id="KW-0658">Purine biosynthesis</keyword>
<keyword id="KW-1185">Reference proteome</keyword>
<keyword id="KW-0678">Repressor</keyword>
<keyword id="KW-0804">Transcription</keyword>
<keyword id="KW-0805">Transcription regulation</keyword>
<feature type="chain" id="PRO_1000140296" description="HTH-type transcriptional repressor PurR">
    <location>
        <begin position="1"/>
        <end position="341"/>
    </location>
</feature>
<feature type="domain" description="HTH lacI-type" evidence="1">
    <location>
        <begin position="2"/>
        <end position="56"/>
    </location>
</feature>
<feature type="DNA-binding region" description="H-T-H motif" evidence="1">
    <location>
        <begin position="4"/>
        <end position="23"/>
    </location>
</feature>
<feature type="DNA-binding region" evidence="1">
    <location>
        <begin position="48"/>
        <end position="56"/>
    </location>
</feature>
<feature type="binding site" evidence="1">
    <location>
        <position position="73"/>
    </location>
    <ligand>
        <name>hypoxanthine</name>
        <dbReference type="ChEBI" id="CHEBI:17368"/>
    </ligand>
</feature>
<feature type="binding site" evidence="1">
    <location>
        <position position="190"/>
    </location>
    <ligand>
        <name>hypoxanthine</name>
        <dbReference type="ChEBI" id="CHEBI:17368"/>
    </ligand>
</feature>
<feature type="binding site" evidence="1">
    <location>
        <position position="192"/>
    </location>
    <ligand>
        <name>hypoxanthine</name>
        <dbReference type="ChEBI" id="CHEBI:17368"/>
    </ligand>
</feature>
<feature type="binding site" evidence="1">
    <location>
        <position position="221"/>
    </location>
    <ligand>
        <name>hypoxanthine</name>
        <dbReference type="ChEBI" id="CHEBI:17368"/>
    </ligand>
</feature>
<feature type="binding site" evidence="1">
    <location>
        <position position="275"/>
    </location>
    <ligand>
        <name>hypoxanthine</name>
        <dbReference type="ChEBI" id="CHEBI:17368"/>
    </ligand>
</feature>
<gene>
    <name evidence="1" type="primary">purR</name>
    <name type="ordered locus">PMI1399</name>
</gene>
<dbReference type="EMBL" id="AM942759">
    <property type="protein sequence ID" value="CAR42957.1"/>
    <property type="molecule type" value="Genomic_DNA"/>
</dbReference>
<dbReference type="RefSeq" id="WP_004243141.1">
    <property type="nucleotide sequence ID" value="NC_010554.1"/>
</dbReference>
<dbReference type="SMR" id="B4EWM9"/>
<dbReference type="EnsemblBacteria" id="CAR42957">
    <property type="protein sequence ID" value="CAR42957"/>
    <property type="gene ID" value="PMI1399"/>
</dbReference>
<dbReference type="GeneID" id="6802204"/>
<dbReference type="KEGG" id="pmr:PMI1399"/>
<dbReference type="eggNOG" id="COG1609">
    <property type="taxonomic scope" value="Bacteria"/>
</dbReference>
<dbReference type="HOGENOM" id="CLU_037628_6_2_6"/>
<dbReference type="UniPathway" id="UPA00488"/>
<dbReference type="Proteomes" id="UP000008319">
    <property type="component" value="Chromosome"/>
</dbReference>
<dbReference type="GO" id="GO:0003700">
    <property type="term" value="F:DNA-binding transcription factor activity"/>
    <property type="evidence" value="ECO:0007669"/>
    <property type="project" value="TreeGrafter"/>
</dbReference>
<dbReference type="GO" id="GO:0000976">
    <property type="term" value="F:transcription cis-regulatory region binding"/>
    <property type="evidence" value="ECO:0007669"/>
    <property type="project" value="TreeGrafter"/>
</dbReference>
<dbReference type="GO" id="GO:0045892">
    <property type="term" value="P:negative regulation of DNA-templated transcription"/>
    <property type="evidence" value="ECO:0007669"/>
    <property type="project" value="UniProtKB-UniRule"/>
</dbReference>
<dbReference type="GO" id="GO:0006164">
    <property type="term" value="P:purine nucleotide biosynthetic process"/>
    <property type="evidence" value="ECO:0007669"/>
    <property type="project" value="UniProtKB-UniPathway"/>
</dbReference>
<dbReference type="CDD" id="cd01392">
    <property type="entry name" value="HTH_LacI"/>
    <property type="match status" value="1"/>
</dbReference>
<dbReference type="CDD" id="cd06275">
    <property type="entry name" value="PBP1_PurR"/>
    <property type="match status" value="1"/>
</dbReference>
<dbReference type="FunFam" id="1.10.260.40:FF:000002">
    <property type="entry name" value="HTH-type transcriptional repressor PurR"/>
    <property type="match status" value="1"/>
</dbReference>
<dbReference type="FunFam" id="3.40.50.2300:FF:000045">
    <property type="entry name" value="HTH-type transcriptional repressor PurR"/>
    <property type="match status" value="1"/>
</dbReference>
<dbReference type="Gene3D" id="3.40.50.2300">
    <property type="match status" value="2"/>
</dbReference>
<dbReference type="Gene3D" id="1.10.260.40">
    <property type="entry name" value="lambda repressor-like DNA-binding domains"/>
    <property type="match status" value="1"/>
</dbReference>
<dbReference type="HAMAP" id="MF_01277">
    <property type="entry name" value="HTH_type_PurR"/>
    <property type="match status" value="1"/>
</dbReference>
<dbReference type="InterPro" id="IPR000843">
    <property type="entry name" value="HTH_LacI"/>
</dbReference>
<dbReference type="InterPro" id="IPR046335">
    <property type="entry name" value="LacI/GalR-like_sensor"/>
</dbReference>
<dbReference type="InterPro" id="IPR010982">
    <property type="entry name" value="Lambda_DNA-bd_dom_sf"/>
</dbReference>
<dbReference type="InterPro" id="IPR028082">
    <property type="entry name" value="Peripla_BP_I"/>
</dbReference>
<dbReference type="InterPro" id="IPR023588">
    <property type="entry name" value="Tscrpt_reg_HTH_PurR"/>
</dbReference>
<dbReference type="NCBIfam" id="NF007979">
    <property type="entry name" value="PRK10703.1"/>
    <property type="match status" value="1"/>
</dbReference>
<dbReference type="PANTHER" id="PTHR30146:SF148">
    <property type="entry name" value="HTH-TYPE TRANSCRIPTIONAL REPRESSOR PURR-RELATED"/>
    <property type="match status" value="1"/>
</dbReference>
<dbReference type="PANTHER" id="PTHR30146">
    <property type="entry name" value="LACI-RELATED TRANSCRIPTIONAL REPRESSOR"/>
    <property type="match status" value="1"/>
</dbReference>
<dbReference type="Pfam" id="PF00356">
    <property type="entry name" value="LacI"/>
    <property type="match status" value="1"/>
</dbReference>
<dbReference type="Pfam" id="PF13377">
    <property type="entry name" value="Peripla_BP_3"/>
    <property type="match status" value="1"/>
</dbReference>
<dbReference type="PRINTS" id="PR00036">
    <property type="entry name" value="HTHLACI"/>
</dbReference>
<dbReference type="SMART" id="SM00354">
    <property type="entry name" value="HTH_LACI"/>
    <property type="match status" value="1"/>
</dbReference>
<dbReference type="SUPFAM" id="SSF47413">
    <property type="entry name" value="lambda repressor-like DNA-binding domains"/>
    <property type="match status" value="1"/>
</dbReference>
<dbReference type="SUPFAM" id="SSF53822">
    <property type="entry name" value="Periplasmic binding protein-like I"/>
    <property type="match status" value="1"/>
</dbReference>
<dbReference type="PROSITE" id="PS00356">
    <property type="entry name" value="HTH_LACI_1"/>
    <property type="match status" value="1"/>
</dbReference>
<dbReference type="PROSITE" id="PS50932">
    <property type="entry name" value="HTH_LACI_2"/>
    <property type="match status" value="1"/>
</dbReference>
<reference key="1">
    <citation type="journal article" date="2008" name="J. Bacteriol.">
        <title>Complete genome sequence of uropathogenic Proteus mirabilis, a master of both adherence and motility.</title>
        <authorList>
            <person name="Pearson M.M."/>
            <person name="Sebaihia M."/>
            <person name="Churcher C."/>
            <person name="Quail M.A."/>
            <person name="Seshasayee A.S."/>
            <person name="Luscombe N.M."/>
            <person name="Abdellah Z."/>
            <person name="Arrosmith C."/>
            <person name="Atkin B."/>
            <person name="Chillingworth T."/>
            <person name="Hauser H."/>
            <person name="Jagels K."/>
            <person name="Moule S."/>
            <person name="Mungall K."/>
            <person name="Norbertczak H."/>
            <person name="Rabbinowitsch E."/>
            <person name="Walker D."/>
            <person name="Whithead S."/>
            <person name="Thomson N.R."/>
            <person name="Rather P.N."/>
            <person name="Parkhill J."/>
            <person name="Mobley H.L.T."/>
        </authorList>
    </citation>
    <scope>NUCLEOTIDE SEQUENCE [LARGE SCALE GENOMIC DNA]</scope>
    <source>
        <strain>HI4320</strain>
    </source>
</reference>
<sequence>MATIKDVAKRAGVSTTTVSHVINKTRFVAENTRAAVWAAIKELNYSPSAVARSLKVNHTKSIGLLATSSEAPYFAEVIEAVENSCYSKGYTLILCNSHNNLDKQKAYLAMLAQKRVDGLLVMCSEYPDHLLSLLEGYRNIPMVVMDWGKARGDFTDTIIDNAFHGGYIAGRYLIERGHRDIGIIPGPLERNTGGGRLQGFLKAMEEAKITVKEEWIVQGDFEPESGYKAMTQMLNQKQRPTAVFCGGDVMAMGAICAADELGLRVPADISIVGYDNIRNARYFTPALTTVHQPKERLGQMAFSMLLDRIVNKREDAQTIEVHPRLVERRSVADGPFIDYRR</sequence>
<comment type="function">
    <text evidence="1">Is the main repressor of the genes involved in the de novo synthesis of purine nucleotides, regulating purB, purC, purEK, purF, purHD, purL, purMN and guaBA expression. PurR is allosterically activated to bind its cognate DNA by binding the purine corepressors, hypoxanthine or guanine, thereby effecting transcription repression.</text>
</comment>
<comment type="pathway">
    <text>Purine metabolism; purine nucleotide biosynthesis [regulation].</text>
</comment>
<comment type="subunit">
    <text evidence="1">Homodimer.</text>
</comment>
<comment type="domain">
    <text evidence="1">Consists of two structural and functional domains: an N-terminal DNA-binding domain, approximately the first 60 residues, and a larger C-terminal domain, approximately 280 residues, which imparts the function of corepressor binding and oligomerization.</text>
</comment>
<proteinExistence type="inferred from homology"/>
<name>PURR_PROMH</name>